<keyword id="KW-0067">ATP-binding</keyword>
<keyword id="KW-0507">mRNA processing</keyword>
<keyword id="KW-0547">Nucleotide-binding</keyword>
<keyword id="KW-1185">Reference proteome</keyword>
<keyword id="KW-0804">Transcription</keyword>
<keyword id="KW-0808">Transferase</keyword>
<sequence>MNNRELINRYLGKTADQPIYYALFHKVGKIKQILNFDLNVFLKLLLKNRDRFLRENKQPTAEIKRRLTHYFTKQHRVRKVGKILSIVEFQHVIVTTFTRVLGVLTIDNRRVSKMYSSTAILDYAAHEDYVEAMLRSYRVTDGAGPPKGRNKVSDLVGYVISMLKEYLKRHNKSAFCHGSYSLHLLNPAIEYGDIDMLQTNSRTFLINLAFLIYCNTGRVTTMMKIPYLLNYIVMFDEEQAHIVDSFQVSQEIFDRIPKILINDIYIIDPCVQLLNGIKMFSQVDRLDDLHTKFEKLRARFCTLLEYVLYDYDMRIGEGSGAGALRRSRFAYSERVATVEAGALGEDLSPARWVAFMDNAALDARIGASTRQAADFGPVTNSRFLEEDGCLYGYFSNTLLLTPDGAPHPVSCNALAAHFLMYFVMTGAPCKPQLACLLNSLVVPEAREFTLVPRDKKLGDHVILSIDHDVFIDF</sequence>
<gene>
    <name type="primary">PAPL</name>
    <name type="ordered locus">CRV054</name>
</gene>
<reference key="1">
    <citation type="journal article" date="2006" name="J. Virol.">
        <title>Genome of crocodilepox virus.</title>
        <authorList>
            <person name="Afonso C.L."/>
            <person name="Tulman E.R."/>
            <person name="Delhon G."/>
            <person name="Lu Z."/>
            <person name="Viljoen G.J."/>
            <person name="Wallace D.B."/>
            <person name="Kutish G.F."/>
            <person name="Rock D.L."/>
        </authorList>
    </citation>
    <scope>NUCLEOTIDE SEQUENCE [LARGE SCALE GENOMIC DNA]</scope>
</reference>
<comment type="function">
    <text>Polymerase that creates the 3'-poly(A) tail of mRNA's.</text>
</comment>
<comment type="catalytic activity">
    <reaction>
        <text>RNA(n) + ATP = RNA(n)-3'-adenine ribonucleotide + diphosphate</text>
        <dbReference type="Rhea" id="RHEA:11332"/>
        <dbReference type="Rhea" id="RHEA-COMP:14527"/>
        <dbReference type="Rhea" id="RHEA-COMP:17347"/>
        <dbReference type="ChEBI" id="CHEBI:30616"/>
        <dbReference type="ChEBI" id="CHEBI:33019"/>
        <dbReference type="ChEBI" id="CHEBI:140395"/>
        <dbReference type="ChEBI" id="CHEBI:173115"/>
        <dbReference type="EC" id="2.7.7.19"/>
    </reaction>
</comment>
<comment type="subunit">
    <text evidence="1">Heterodimer of a large (catalytic) subunit and a small (regulatory) subunit.</text>
</comment>
<comment type="similarity">
    <text evidence="2">Belongs to the poxviridae poly(A) polymerase catalytic subunit family.</text>
</comment>
<protein>
    <recommendedName>
        <fullName>Poly(A) polymerase catalytic subunit</fullName>
        <ecNumber>2.7.7.19</ecNumber>
    </recommendedName>
    <alternativeName>
        <fullName>Poly(A) polymerase large subunit</fullName>
        <shortName>PAP-L</shortName>
    </alternativeName>
</protein>
<organismHost>
    <name type="scientific">Crocodylus johnstoni</name>
    <name type="common">Australian freshwater crocodile</name>
    <dbReference type="NCBI Taxonomy" id="184234"/>
</organismHost>
<organismHost>
    <name type="scientific">Crocodylus niloticus</name>
    <name type="common">Nile crocodile</name>
    <name type="synonym">African crocodile</name>
    <dbReference type="NCBI Taxonomy" id="8501"/>
</organismHost>
<organismHost>
    <name type="scientific">Crocodylus porosus</name>
    <name type="common">Saltwater crocodile</name>
    <name type="synonym">Estuarine crocodile</name>
    <dbReference type="NCBI Taxonomy" id="8502"/>
</organismHost>
<evidence type="ECO:0000250" key="1"/>
<evidence type="ECO:0000305" key="2"/>
<dbReference type="EC" id="2.7.7.19"/>
<dbReference type="EMBL" id="DQ356948">
    <property type="protein sequence ID" value="ABJ08945.1"/>
    <property type="molecule type" value="Genomic_DNA"/>
</dbReference>
<dbReference type="RefSeq" id="YP_784244.1">
    <property type="nucleotide sequence ID" value="NC_008030.1"/>
</dbReference>
<dbReference type="SMR" id="Q070J7"/>
<dbReference type="GeneID" id="4363317"/>
<dbReference type="KEGG" id="vg:4363317"/>
<dbReference type="Proteomes" id="UP000011300">
    <property type="component" value="Segment"/>
</dbReference>
<dbReference type="GO" id="GO:0005524">
    <property type="term" value="F:ATP binding"/>
    <property type="evidence" value="ECO:0007669"/>
    <property type="project" value="UniProtKB-KW"/>
</dbReference>
<dbReference type="GO" id="GO:1990817">
    <property type="term" value="F:poly(A) RNA polymerase activity"/>
    <property type="evidence" value="ECO:0007669"/>
    <property type="project" value="UniProtKB-EC"/>
</dbReference>
<dbReference type="GO" id="GO:0006397">
    <property type="term" value="P:mRNA processing"/>
    <property type="evidence" value="ECO:0007669"/>
    <property type="project" value="UniProtKB-KW"/>
</dbReference>
<dbReference type="CDD" id="cd20919">
    <property type="entry name" value="polyA_pol_Pox"/>
    <property type="match status" value="1"/>
</dbReference>
<dbReference type="Gene3D" id="1.20.1270.320">
    <property type="entry name" value="Poxvirus poly(A) polymerase, N domain"/>
    <property type="match status" value="1"/>
</dbReference>
<dbReference type="Gene3D" id="3.30.460.60">
    <property type="entry name" value="Poxvirus poly(A) polymerase, nucleotidyltransferase domain"/>
    <property type="match status" value="1"/>
</dbReference>
<dbReference type="InterPro" id="IPR004976">
    <property type="entry name" value="PolyA_pol_cat_Poxvir"/>
</dbReference>
<dbReference type="InterPro" id="IPR037265">
    <property type="entry name" value="PolyA_pol_cat_sf"/>
</dbReference>
<dbReference type="InterPro" id="IPR024231">
    <property type="entry name" value="PolyA_pol_nucTrfase_Poxvir"/>
</dbReference>
<dbReference type="InterPro" id="IPR038419">
    <property type="entry name" value="PolyA_pol_nucTrfase_sf_Poxvir"/>
</dbReference>
<dbReference type="InterPro" id="IPR024397">
    <property type="entry name" value="Poxvirus_polyA_pol_cat_C"/>
</dbReference>
<dbReference type="InterPro" id="IPR024398">
    <property type="entry name" value="Poxvirus_polyA_pol_cat_N"/>
</dbReference>
<dbReference type="InterPro" id="IPR038337">
    <property type="entry name" value="Poxvirus_polyA_pol_cat_N_sf"/>
</dbReference>
<dbReference type="Pfam" id="PF03296">
    <property type="entry name" value="Pox_polyA_pol"/>
    <property type="match status" value="1"/>
</dbReference>
<dbReference type="Pfam" id="PF12629">
    <property type="entry name" value="Pox_polyA_pol_C"/>
    <property type="match status" value="1"/>
</dbReference>
<dbReference type="Pfam" id="PF12630">
    <property type="entry name" value="Pox_polyA_pol_N"/>
    <property type="match status" value="1"/>
</dbReference>
<dbReference type="PIRSF" id="PIRSF015693">
    <property type="entry name" value="VAC-48L_nuct"/>
    <property type="match status" value="1"/>
</dbReference>
<dbReference type="SUPFAM" id="SSF160957">
    <property type="entry name" value="Poly(A) polymerase catalytic subunit-like"/>
    <property type="match status" value="1"/>
</dbReference>
<accession>Q070J7</accession>
<feature type="chain" id="PRO_0000308929" description="Poly(A) polymerase catalytic subunit">
    <location>
        <begin position="1"/>
        <end position="473"/>
    </location>
</feature>
<feature type="active site" evidence="1">
    <location>
        <position position="193"/>
    </location>
</feature>
<feature type="active site" evidence="1">
    <location>
        <position position="195"/>
    </location>
</feature>
<organism>
    <name type="scientific">Nile crocodilepox virus (isolate Crocodylus niloticus/Zimbabwe/Ume/2001)</name>
    <name type="common">CRV</name>
    <dbReference type="NCBI Taxonomy" id="1289473"/>
    <lineage>
        <taxon>Viruses</taxon>
        <taxon>Varidnaviria</taxon>
        <taxon>Bamfordvirae</taxon>
        <taxon>Nucleocytoviricota</taxon>
        <taxon>Pokkesviricetes</taxon>
        <taxon>Chitovirales</taxon>
        <taxon>Poxviridae</taxon>
        <taxon>Chordopoxvirinae</taxon>
        <taxon>Crocodylidpoxvirus</taxon>
        <taxon>Nile crocodilepox virus</taxon>
    </lineage>
</organism>
<name>PAP1_CPRVZ</name>
<proteinExistence type="inferred from homology"/>